<name>SYT_PROM3</name>
<comment type="function">
    <text evidence="1">Catalyzes the attachment of threonine to tRNA(Thr) in a two-step reaction: L-threonine is first activated by ATP to form Thr-AMP and then transferred to the acceptor end of tRNA(Thr). Also edits incorrectly charged L-seryl-tRNA(Thr).</text>
</comment>
<comment type="catalytic activity">
    <reaction evidence="1">
        <text>tRNA(Thr) + L-threonine + ATP = L-threonyl-tRNA(Thr) + AMP + diphosphate + H(+)</text>
        <dbReference type="Rhea" id="RHEA:24624"/>
        <dbReference type="Rhea" id="RHEA-COMP:9670"/>
        <dbReference type="Rhea" id="RHEA-COMP:9704"/>
        <dbReference type="ChEBI" id="CHEBI:15378"/>
        <dbReference type="ChEBI" id="CHEBI:30616"/>
        <dbReference type="ChEBI" id="CHEBI:33019"/>
        <dbReference type="ChEBI" id="CHEBI:57926"/>
        <dbReference type="ChEBI" id="CHEBI:78442"/>
        <dbReference type="ChEBI" id="CHEBI:78534"/>
        <dbReference type="ChEBI" id="CHEBI:456215"/>
        <dbReference type="EC" id="6.1.1.3"/>
    </reaction>
</comment>
<comment type="cofactor">
    <cofactor evidence="1">
        <name>Zn(2+)</name>
        <dbReference type="ChEBI" id="CHEBI:29105"/>
    </cofactor>
    <text evidence="1">Binds 1 zinc ion per subunit.</text>
</comment>
<comment type="subunit">
    <text evidence="1">Homodimer.</text>
</comment>
<comment type="subcellular location">
    <subcellularLocation>
        <location evidence="1">Cytoplasm</location>
    </subcellularLocation>
</comment>
<comment type="similarity">
    <text evidence="1">Belongs to the class-II aminoacyl-tRNA synthetase family.</text>
</comment>
<accession>A2CAU4</accession>
<organism>
    <name type="scientific">Prochlorococcus marinus (strain MIT 9303)</name>
    <dbReference type="NCBI Taxonomy" id="59922"/>
    <lineage>
        <taxon>Bacteria</taxon>
        <taxon>Bacillati</taxon>
        <taxon>Cyanobacteriota</taxon>
        <taxon>Cyanophyceae</taxon>
        <taxon>Synechococcales</taxon>
        <taxon>Prochlorococcaceae</taxon>
        <taxon>Prochlorococcus</taxon>
    </lineage>
</organism>
<proteinExistence type="inferred from homology"/>
<gene>
    <name evidence="1" type="primary">thrS</name>
    <name type="ordered locus">P9303_18621</name>
</gene>
<dbReference type="EC" id="6.1.1.3" evidence="1"/>
<dbReference type="EMBL" id="CP000554">
    <property type="protein sequence ID" value="ABM78604.1"/>
    <property type="molecule type" value="Genomic_DNA"/>
</dbReference>
<dbReference type="RefSeq" id="WP_011826489.1">
    <property type="nucleotide sequence ID" value="NC_008820.1"/>
</dbReference>
<dbReference type="SMR" id="A2CAU4"/>
<dbReference type="STRING" id="59922.P9303_18621"/>
<dbReference type="KEGG" id="pmf:P9303_18621"/>
<dbReference type="HOGENOM" id="CLU_008554_0_1_3"/>
<dbReference type="BioCyc" id="PMAR59922:G1G80-1613-MONOMER"/>
<dbReference type="Proteomes" id="UP000002274">
    <property type="component" value="Chromosome"/>
</dbReference>
<dbReference type="GO" id="GO:0005829">
    <property type="term" value="C:cytosol"/>
    <property type="evidence" value="ECO:0007669"/>
    <property type="project" value="TreeGrafter"/>
</dbReference>
<dbReference type="GO" id="GO:0005524">
    <property type="term" value="F:ATP binding"/>
    <property type="evidence" value="ECO:0007669"/>
    <property type="project" value="UniProtKB-UniRule"/>
</dbReference>
<dbReference type="GO" id="GO:0046872">
    <property type="term" value="F:metal ion binding"/>
    <property type="evidence" value="ECO:0007669"/>
    <property type="project" value="UniProtKB-KW"/>
</dbReference>
<dbReference type="GO" id="GO:0004829">
    <property type="term" value="F:threonine-tRNA ligase activity"/>
    <property type="evidence" value="ECO:0007669"/>
    <property type="project" value="UniProtKB-UniRule"/>
</dbReference>
<dbReference type="GO" id="GO:0000049">
    <property type="term" value="F:tRNA binding"/>
    <property type="evidence" value="ECO:0007669"/>
    <property type="project" value="UniProtKB-KW"/>
</dbReference>
<dbReference type="GO" id="GO:0006435">
    <property type="term" value="P:threonyl-tRNA aminoacylation"/>
    <property type="evidence" value="ECO:0007669"/>
    <property type="project" value="UniProtKB-UniRule"/>
</dbReference>
<dbReference type="CDD" id="cd01667">
    <property type="entry name" value="TGS_ThrRS"/>
    <property type="match status" value="1"/>
</dbReference>
<dbReference type="CDD" id="cd00860">
    <property type="entry name" value="ThrRS_anticodon"/>
    <property type="match status" value="1"/>
</dbReference>
<dbReference type="CDD" id="cd00771">
    <property type="entry name" value="ThrRS_core"/>
    <property type="match status" value="1"/>
</dbReference>
<dbReference type="FunFam" id="3.10.20.30:FF:000005">
    <property type="entry name" value="Threonine--tRNA ligase"/>
    <property type="match status" value="1"/>
</dbReference>
<dbReference type="FunFam" id="3.30.54.20:FF:000002">
    <property type="entry name" value="Threonine--tRNA ligase"/>
    <property type="match status" value="1"/>
</dbReference>
<dbReference type="FunFam" id="3.30.930.10:FF:000002">
    <property type="entry name" value="Threonine--tRNA ligase"/>
    <property type="match status" value="1"/>
</dbReference>
<dbReference type="FunFam" id="3.40.50.800:FF:000001">
    <property type="entry name" value="Threonine--tRNA ligase"/>
    <property type="match status" value="1"/>
</dbReference>
<dbReference type="FunFam" id="3.30.980.10:FF:000005">
    <property type="entry name" value="Threonyl-tRNA synthetase, mitochondrial"/>
    <property type="match status" value="1"/>
</dbReference>
<dbReference type="Gene3D" id="3.10.20.30">
    <property type="match status" value="1"/>
</dbReference>
<dbReference type="Gene3D" id="3.30.54.20">
    <property type="match status" value="1"/>
</dbReference>
<dbReference type="Gene3D" id="3.40.50.800">
    <property type="entry name" value="Anticodon-binding domain"/>
    <property type="match status" value="1"/>
</dbReference>
<dbReference type="Gene3D" id="3.30.930.10">
    <property type="entry name" value="Bira Bifunctional Protein, Domain 2"/>
    <property type="match status" value="1"/>
</dbReference>
<dbReference type="Gene3D" id="3.30.980.10">
    <property type="entry name" value="Threonyl-trna Synthetase, Chain A, domain 2"/>
    <property type="match status" value="1"/>
</dbReference>
<dbReference type="HAMAP" id="MF_00184">
    <property type="entry name" value="Thr_tRNA_synth"/>
    <property type="match status" value="1"/>
</dbReference>
<dbReference type="InterPro" id="IPR002314">
    <property type="entry name" value="aa-tRNA-synt_IIb"/>
</dbReference>
<dbReference type="InterPro" id="IPR006195">
    <property type="entry name" value="aa-tRNA-synth_II"/>
</dbReference>
<dbReference type="InterPro" id="IPR045864">
    <property type="entry name" value="aa-tRNA-synth_II/BPL/LPL"/>
</dbReference>
<dbReference type="InterPro" id="IPR004154">
    <property type="entry name" value="Anticodon-bd"/>
</dbReference>
<dbReference type="InterPro" id="IPR036621">
    <property type="entry name" value="Anticodon-bd_dom_sf"/>
</dbReference>
<dbReference type="InterPro" id="IPR012675">
    <property type="entry name" value="Beta-grasp_dom_sf"/>
</dbReference>
<dbReference type="InterPro" id="IPR004095">
    <property type="entry name" value="TGS"/>
</dbReference>
<dbReference type="InterPro" id="IPR012676">
    <property type="entry name" value="TGS-like"/>
</dbReference>
<dbReference type="InterPro" id="IPR002320">
    <property type="entry name" value="Thr-tRNA-ligase_IIa"/>
</dbReference>
<dbReference type="InterPro" id="IPR018163">
    <property type="entry name" value="Thr/Ala-tRNA-synth_IIc_edit"/>
</dbReference>
<dbReference type="InterPro" id="IPR047246">
    <property type="entry name" value="ThrRS_anticodon"/>
</dbReference>
<dbReference type="InterPro" id="IPR033728">
    <property type="entry name" value="ThrRS_core"/>
</dbReference>
<dbReference type="InterPro" id="IPR012947">
    <property type="entry name" value="tRNA_SAD"/>
</dbReference>
<dbReference type="NCBIfam" id="TIGR00418">
    <property type="entry name" value="thrS"/>
    <property type="match status" value="1"/>
</dbReference>
<dbReference type="PANTHER" id="PTHR11451:SF44">
    <property type="entry name" value="THREONINE--TRNA LIGASE, CHLOROPLASTIC_MITOCHONDRIAL 2"/>
    <property type="match status" value="1"/>
</dbReference>
<dbReference type="PANTHER" id="PTHR11451">
    <property type="entry name" value="THREONINE-TRNA LIGASE"/>
    <property type="match status" value="1"/>
</dbReference>
<dbReference type="Pfam" id="PF03129">
    <property type="entry name" value="HGTP_anticodon"/>
    <property type="match status" value="1"/>
</dbReference>
<dbReference type="Pfam" id="PF02824">
    <property type="entry name" value="TGS"/>
    <property type="match status" value="1"/>
</dbReference>
<dbReference type="Pfam" id="PF00587">
    <property type="entry name" value="tRNA-synt_2b"/>
    <property type="match status" value="1"/>
</dbReference>
<dbReference type="Pfam" id="PF07973">
    <property type="entry name" value="tRNA_SAD"/>
    <property type="match status" value="1"/>
</dbReference>
<dbReference type="PRINTS" id="PR01047">
    <property type="entry name" value="TRNASYNTHTHR"/>
</dbReference>
<dbReference type="SMART" id="SM00863">
    <property type="entry name" value="tRNA_SAD"/>
    <property type="match status" value="1"/>
</dbReference>
<dbReference type="SUPFAM" id="SSF52954">
    <property type="entry name" value="Class II aaRS ABD-related"/>
    <property type="match status" value="1"/>
</dbReference>
<dbReference type="SUPFAM" id="SSF55681">
    <property type="entry name" value="Class II aaRS and biotin synthetases"/>
    <property type="match status" value="1"/>
</dbReference>
<dbReference type="SUPFAM" id="SSF81271">
    <property type="entry name" value="TGS-like"/>
    <property type="match status" value="1"/>
</dbReference>
<dbReference type="SUPFAM" id="SSF55186">
    <property type="entry name" value="ThrRS/AlaRS common domain"/>
    <property type="match status" value="1"/>
</dbReference>
<dbReference type="PROSITE" id="PS50862">
    <property type="entry name" value="AA_TRNA_LIGASE_II"/>
    <property type="match status" value="1"/>
</dbReference>
<dbReference type="PROSITE" id="PS51880">
    <property type="entry name" value="TGS"/>
    <property type="match status" value="1"/>
</dbReference>
<protein>
    <recommendedName>
        <fullName evidence="1">Threonine--tRNA ligase</fullName>
        <ecNumber evidence="1">6.1.1.3</ecNumber>
    </recommendedName>
    <alternativeName>
        <fullName evidence="1">Threonyl-tRNA synthetase</fullName>
        <shortName evidence="1">ThrRS</shortName>
    </alternativeName>
</protein>
<reference key="1">
    <citation type="journal article" date="2007" name="PLoS Genet.">
        <title>Patterns and implications of gene gain and loss in the evolution of Prochlorococcus.</title>
        <authorList>
            <person name="Kettler G.C."/>
            <person name="Martiny A.C."/>
            <person name="Huang K."/>
            <person name="Zucker J."/>
            <person name="Coleman M.L."/>
            <person name="Rodrigue S."/>
            <person name="Chen F."/>
            <person name="Lapidus A."/>
            <person name="Ferriera S."/>
            <person name="Johnson J."/>
            <person name="Steglich C."/>
            <person name="Church G.M."/>
            <person name="Richardson P."/>
            <person name="Chisholm S.W."/>
        </authorList>
    </citation>
    <scope>NUCLEOTIDE SEQUENCE [LARGE SCALE GENOMIC DNA]</scope>
    <source>
        <strain>MIT 9303</strain>
    </source>
</reference>
<keyword id="KW-0030">Aminoacyl-tRNA synthetase</keyword>
<keyword id="KW-0067">ATP-binding</keyword>
<keyword id="KW-0963">Cytoplasm</keyword>
<keyword id="KW-0436">Ligase</keyword>
<keyword id="KW-0479">Metal-binding</keyword>
<keyword id="KW-0547">Nucleotide-binding</keyword>
<keyword id="KW-0648">Protein biosynthesis</keyword>
<keyword id="KW-0694">RNA-binding</keyword>
<keyword id="KW-0820">tRNA-binding</keyword>
<keyword id="KW-0862">Zinc</keyword>
<sequence length="640" mass="73291">MPIITLPDGNKKKFDQPVTIMEVAESLGPGLAKAAIAGRVNGVLLDTCIPIEKDSEVNIITAKDQDGIETIRHSFAHLIGHAVKQLYPEAKMAIGPVIEDGFYYDIAYDQPFTPKDLEAIEARMKELVKLDYDVNVEIVSREEAHKEFEKRCEPYKIEIVDEIPENEIIKLYRHQEYTDMCRGPHVPNTRHLRTFKLMKVSGAYWRGDSNKTMLQRIYGTAWGSSKELKAYLKRLEEAEKRDHRRIAKQMSLFHTQEEAPGMIFWHAKGWAIYQVLEQYIRETLSLHAYQEIRTPQVVDRSLWEKSGHWEKFKDDMFTTTSENREYAIKPMNCPCHVQIFNQGLKSYRDLPIRLAEFGSCLRNEPSGSLHGLMRVRNFVQDDAHIFCTELQVQEEVSKFIDLVFEIYRSFGFDSVLIKLSTRPEKRVGSDEIWDKSEKALSDALDAKGLAWDLLPGEGAFYGPKIEFSLKDCLGRVWQCGTIQVDFSMPERLGASYVAEDSQRRTPVMLHRAILGSFERFIGILIEHYAGRMPVWLAPVQVAVMGITDRNAQTCQDVCKKLSALEYRTEVDLRNEKIGFKVREHTLQRVPFLIIIGDKEQQSGEVAVRTREGKDFGSMPLNSFISLLDEAIALKGRSGVS</sequence>
<feature type="chain" id="PRO_1000020464" description="Threonine--tRNA ligase">
    <location>
        <begin position="1"/>
        <end position="640"/>
    </location>
</feature>
<feature type="domain" description="TGS" evidence="2">
    <location>
        <begin position="1"/>
        <end position="61"/>
    </location>
</feature>
<feature type="region of interest" description="Catalytic" evidence="1">
    <location>
        <begin position="242"/>
        <end position="533"/>
    </location>
</feature>
<feature type="binding site" evidence="1">
    <location>
        <position position="333"/>
    </location>
    <ligand>
        <name>Zn(2+)</name>
        <dbReference type="ChEBI" id="CHEBI:29105"/>
    </ligand>
</feature>
<feature type="binding site" evidence="1">
    <location>
        <position position="384"/>
    </location>
    <ligand>
        <name>Zn(2+)</name>
        <dbReference type="ChEBI" id="CHEBI:29105"/>
    </ligand>
</feature>
<feature type="binding site" evidence="1">
    <location>
        <position position="510"/>
    </location>
    <ligand>
        <name>Zn(2+)</name>
        <dbReference type="ChEBI" id="CHEBI:29105"/>
    </ligand>
</feature>
<evidence type="ECO:0000255" key="1">
    <source>
        <dbReference type="HAMAP-Rule" id="MF_00184"/>
    </source>
</evidence>
<evidence type="ECO:0000255" key="2">
    <source>
        <dbReference type="PROSITE-ProRule" id="PRU01228"/>
    </source>
</evidence>